<proteinExistence type="evidence at protein level"/>
<comment type="function">
    <text evidence="3 6 9">Constitutively active calcium selective cation channel thought to be involved in Ca(2+) reabsorption in kidney and intestine (PubMed:12077127, PubMed:14679186). Required for normal Ca(2+) reabsorption in the kidney distal convoluted tubules (PubMed:14679186). The channel is activated by low internal calcium level and the current exhibits an inward rectification. A Ca(2+)-dependent feedback regulation includes fast channel inactivation and slow current decay (PubMed:12077127). Heteromeric assembly with TRPV6 seems to modify channel properties. TRPV5-TRPV6 heteromultimeric concatemers exhibit voltage-dependent gating (By similarity).</text>
</comment>
<comment type="catalytic activity">
    <reaction evidence="6 9">
        <text>Ca(2+)(in) = Ca(2+)(out)</text>
        <dbReference type="Rhea" id="RHEA:29671"/>
        <dbReference type="ChEBI" id="CHEBI:29108"/>
    </reaction>
</comment>
<comment type="activity regulation">
    <text evidence="1">Activated by WNK3.</text>
</comment>
<comment type="subunit">
    <text evidence="7 8 10 11">Homotetramer and probably heterotetramer with TRPV6. Interacts with TRPV6 (PubMed:12574114). Interacts with S100A10 and probably with the ANAX2-S100A10 heterotetramer. The interaction with S100A10 is required for the trafficking to the plasma membrane (PubMed:12660155). Interacts with calmodulin (PubMed:15123711). Interacts with BSPRY, which results in its inactivation (PubMed:16380433).</text>
</comment>
<comment type="interaction">
    <interactant intactId="EBI-538447">
        <id>P69744</id>
    </interactant>
    <interactant intactId="EBI-295378">
        <id>Q80UE6</id>
        <label>Wnk4</label>
    </interactant>
    <organismsDiffer>false</organismsDiffer>
    <experiments>2</experiments>
</comment>
<comment type="subcellular location">
    <subcellularLocation>
        <location evidence="8">Apical cell membrane</location>
        <topology evidence="8">Multi-pass membrane protein</topology>
    </subcellularLocation>
    <text evidence="8">Colocalized with S100A10 and ANAX2 along the apical domain of kidney distal tubular cells.</text>
</comment>
<comment type="tissue specificity">
    <text evidence="9">Detected in kidney cortex (at protein level).</text>
</comment>
<comment type="PTM">
    <text evidence="1">Glycosylated.</text>
</comment>
<comment type="disruption phenotype">
    <text evidence="9 12">Mutant mice appear grossly normal and are fertile. They display polyuria and increased urinary excretion of Ca(2+), due to defective Ca(2+) reabsorption in the kidney distal convoluted tubules. Likewise, they display increased urinary excretion of phosphate. Besides, their urine has a lower pH. The polyuria and the urine acidification may be a response to the high urinary Ca(2+) levels, preventing the formation of kidney stones (PubMed:14679186). Serum Ca(2+) and phosphate levels are normal, probably due to increased expression of TRPV6 and increased Ca(2+) absorption in the intestine. The increased expression of TRPV6 may be due to the increased serum levels of 1,25-dihydroxy-vitamin D3 that are observed in mutant mice (PubMed:14679186, PubMed:27102152). Age-related changes in trabecular and cortical bone mass are accelerated in male mutant mice, including reduced trabecular and cortical bone thickness. Still, this has no effect on bone strength (PubMed:27102152).</text>
</comment>
<comment type="similarity">
    <text evidence="13">Belongs to the transient receptor (TC 1.A.4) family. TrpV subfamily. TRPV5 sub-subfamily.</text>
</comment>
<comment type="sequence caution" evidence="13">
    <conflict type="frameshift">
        <sequence resource="EMBL" id="AK085479"/>
    </conflict>
</comment>
<accession>P69744</accession>
<accession>Q2TB50</accession>
<name>TRPV5_MOUSE</name>
<reference key="1">
    <citation type="submission" date="2001-09" db="EMBL/GenBank/DDBJ databases">
        <title>Characterization of two epithelial calcium channel genes in mice.</title>
        <authorList>
            <person name="Weber K."/>
            <person name="Zeitz U."/>
            <person name="Rump A."/>
            <person name="Erben R."/>
            <person name="Adamski J."/>
        </authorList>
    </citation>
    <scope>NUCLEOTIDE SEQUENCE [GENOMIC DNA]</scope>
</reference>
<reference key="2">
    <citation type="journal article" date="2005" name="Science">
        <title>The transcriptional landscape of the mammalian genome.</title>
        <authorList>
            <person name="Carninci P."/>
            <person name="Kasukawa T."/>
            <person name="Katayama S."/>
            <person name="Gough J."/>
            <person name="Frith M.C."/>
            <person name="Maeda N."/>
            <person name="Oyama R."/>
            <person name="Ravasi T."/>
            <person name="Lenhard B."/>
            <person name="Wells C."/>
            <person name="Kodzius R."/>
            <person name="Shimokawa K."/>
            <person name="Bajic V.B."/>
            <person name="Brenner S.E."/>
            <person name="Batalov S."/>
            <person name="Forrest A.R."/>
            <person name="Zavolan M."/>
            <person name="Davis M.J."/>
            <person name="Wilming L.G."/>
            <person name="Aidinis V."/>
            <person name="Allen J.E."/>
            <person name="Ambesi-Impiombato A."/>
            <person name="Apweiler R."/>
            <person name="Aturaliya R.N."/>
            <person name="Bailey T.L."/>
            <person name="Bansal M."/>
            <person name="Baxter L."/>
            <person name="Beisel K.W."/>
            <person name="Bersano T."/>
            <person name="Bono H."/>
            <person name="Chalk A.M."/>
            <person name="Chiu K.P."/>
            <person name="Choudhary V."/>
            <person name="Christoffels A."/>
            <person name="Clutterbuck D.R."/>
            <person name="Crowe M.L."/>
            <person name="Dalla E."/>
            <person name="Dalrymple B.P."/>
            <person name="de Bono B."/>
            <person name="Della Gatta G."/>
            <person name="di Bernardo D."/>
            <person name="Down T."/>
            <person name="Engstrom P."/>
            <person name="Fagiolini M."/>
            <person name="Faulkner G."/>
            <person name="Fletcher C.F."/>
            <person name="Fukushima T."/>
            <person name="Furuno M."/>
            <person name="Futaki S."/>
            <person name="Gariboldi M."/>
            <person name="Georgii-Hemming P."/>
            <person name="Gingeras T.R."/>
            <person name="Gojobori T."/>
            <person name="Green R.E."/>
            <person name="Gustincich S."/>
            <person name="Harbers M."/>
            <person name="Hayashi Y."/>
            <person name="Hensch T.K."/>
            <person name="Hirokawa N."/>
            <person name="Hill D."/>
            <person name="Huminiecki L."/>
            <person name="Iacono M."/>
            <person name="Ikeo K."/>
            <person name="Iwama A."/>
            <person name="Ishikawa T."/>
            <person name="Jakt M."/>
            <person name="Kanapin A."/>
            <person name="Katoh M."/>
            <person name="Kawasawa Y."/>
            <person name="Kelso J."/>
            <person name="Kitamura H."/>
            <person name="Kitano H."/>
            <person name="Kollias G."/>
            <person name="Krishnan S.P."/>
            <person name="Kruger A."/>
            <person name="Kummerfeld S.K."/>
            <person name="Kurochkin I.V."/>
            <person name="Lareau L.F."/>
            <person name="Lazarevic D."/>
            <person name="Lipovich L."/>
            <person name="Liu J."/>
            <person name="Liuni S."/>
            <person name="McWilliam S."/>
            <person name="Madan Babu M."/>
            <person name="Madera M."/>
            <person name="Marchionni L."/>
            <person name="Matsuda H."/>
            <person name="Matsuzawa S."/>
            <person name="Miki H."/>
            <person name="Mignone F."/>
            <person name="Miyake S."/>
            <person name="Morris K."/>
            <person name="Mottagui-Tabar S."/>
            <person name="Mulder N."/>
            <person name="Nakano N."/>
            <person name="Nakauchi H."/>
            <person name="Ng P."/>
            <person name="Nilsson R."/>
            <person name="Nishiguchi S."/>
            <person name="Nishikawa S."/>
            <person name="Nori F."/>
            <person name="Ohara O."/>
            <person name="Okazaki Y."/>
            <person name="Orlando V."/>
            <person name="Pang K.C."/>
            <person name="Pavan W.J."/>
            <person name="Pavesi G."/>
            <person name="Pesole G."/>
            <person name="Petrovsky N."/>
            <person name="Piazza S."/>
            <person name="Reed J."/>
            <person name="Reid J.F."/>
            <person name="Ring B.Z."/>
            <person name="Ringwald M."/>
            <person name="Rost B."/>
            <person name="Ruan Y."/>
            <person name="Salzberg S.L."/>
            <person name="Sandelin A."/>
            <person name="Schneider C."/>
            <person name="Schoenbach C."/>
            <person name="Sekiguchi K."/>
            <person name="Semple C.A."/>
            <person name="Seno S."/>
            <person name="Sessa L."/>
            <person name="Sheng Y."/>
            <person name="Shibata Y."/>
            <person name="Shimada H."/>
            <person name="Shimada K."/>
            <person name="Silva D."/>
            <person name="Sinclair B."/>
            <person name="Sperling S."/>
            <person name="Stupka E."/>
            <person name="Sugiura K."/>
            <person name="Sultana R."/>
            <person name="Takenaka Y."/>
            <person name="Taki K."/>
            <person name="Tammoja K."/>
            <person name="Tan S.L."/>
            <person name="Tang S."/>
            <person name="Taylor M.S."/>
            <person name="Tegner J."/>
            <person name="Teichmann S.A."/>
            <person name="Ueda H.R."/>
            <person name="van Nimwegen E."/>
            <person name="Verardo R."/>
            <person name="Wei C.L."/>
            <person name="Yagi K."/>
            <person name="Yamanishi H."/>
            <person name="Zabarovsky E."/>
            <person name="Zhu S."/>
            <person name="Zimmer A."/>
            <person name="Hide W."/>
            <person name="Bult C."/>
            <person name="Grimmond S.M."/>
            <person name="Teasdale R.D."/>
            <person name="Liu E.T."/>
            <person name="Brusic V."/>
            <person name="Quackenbush J."/>
            <person name="Wahlestedt C."/>
            <person name="Mattick J.S."/>
            <person name="Hume D.A."/>
            <person name="Kai C."/>
            <person name="Sasaki D."/>
            <person name="Tomaru Y."/>
            <person name="Fukuda S."/>
            <person name="Kanamori-Katayama M."/>
            <person name="Suzuki M."/>
            <person name="Aoki J."/>
            <person name="Arakawa T."/>
            <person name="Iida J."/>
            <person name="Imamura K."/>
            <person name="Itoh M."/>
            <person name="Kato T."/>
            <person name="Kawaji H."/>
            <person name="Kawagashira N."/>
            <person name="Kawashima T."/>
            <person name="Kojima M."/>
            <person name="Kondo S."/>
            <person name="Konno H."/>
            <person name="Nakano K."/>
            <person name="Ninomiya N."/>
            <person name="Nishio T."/>
            <person name="Okada M."/>
            <person name="Plessy C."/>
            <person name="Shibata K."/>
            <person name="Shiraki T."/>
            <person name="Suzuki S."/>
            <person name="Tagami M."/>
            <person name="Waki K."/>
            <person name="Watahiki A."/>
            <person name="Okamura-Oho Y."/>
            <person name="Suzuki H."/>
            <person name="Kawai J."/>
            <person name="Hayashizaki Y."/>
        </authorList>
    </citation>
    <scope>NUCLEOTIDE SEQUENCE [LARGE SCALE MRNA]</scope>
    <source>
        <tissue>Kidney</tissue>
    </source>
</reference>
<reference key="3">
    <citation type="submission" date="2005-09" db="EMBL/GenBank/DDBJ databases">
        <authorList>
            <person name="Mural R.J."/>
            <person name="Adams M.D."/>
            <person name="Myers E.W."/>
            <person name="Smith H.O."/>
            <person name="Venter J.C."/>
        </authorList>
    </citation>
    <scope>NUCLEOTIDE SEQUENCE [LARGE SCALE GENOMIC DNA]</scope>
</reference>
<reference key="4">
    <citation type="journal article" date="2004" name="Genome Res.">
        <title>The status, quality, and expansion of the NIH full-length cDNA project: the Mammalian Gene Collection (MGC).</title>
        <authorList>
            <consortium name="The MGC Project Team"/>
        </authorList>
    </citation>
    <scope>NUCLEOTIDE SEQUENCE [LARGE SCALE MRNA]</scope>
</reference>
<reference key="5">
    <citation type="journal article" date="2002" name="J. Biol. Chem.">
        <title>Fast and slow inactivation kinetics of the Ca2+ channels ECaC1 and ECaC2 (TRPV5 and TRPV6). Role of the intracellular loop located between transmembrane segments 2 and 3.</title>
        <authorList>
            <person name="Nilius B."/>
            <person name="Prenen J."/>
            <person name="Hoenderop J.G."/>
            <person name="Vennekens R."/>
            <person name="Hoefs S."/>
            <person name="Weidema A.F."/>
            <person name="Droogmans G."/>
            <person name="Bindels R.J.M."/>
        </authorList>
    </citation>
    <scope>FUNCTION</scope>
    <scope>MUTAGENESIS OF 403-VAL--SER-406</scope>
    <scope>TRANSPORTER ACTIVITY</scope>
</reference>
<reference key="6">
    <citation type="journal article" date="2003" name="EMBO J.">
        <title>Homo- and heterotetrameric architecture of the epithelial Ca2+ channels TRPV5 and TRPV6.</title>
        <authorList>
            <person name="Hoenderop J.G."/>
            <person name="Voets T."/>
            <person name="Hoefs S."/>
            <person name="Weidema F."/>
            <person name="Prenen J."/>
            <person name="Nilius B."/>
            <person name="Bindels R.J.M."/>
        </authorList>
    </citation>
    <scope>SUBUNIT</scope>
    <scope>INTERACTION WITH TRPV6</scope>
</reference>
<reference key="7">
    <citation type="journal article" date="2003" name="EMBO J.">
        <title>Functional expression of the epithelial Ca(2+) channels (TRPV5 and TRPV6) requires association of the S100A10-annexin 2 complex.</title>
        <authorList>
            <person name="van de Graaf S.F."/>
            <person name="Hoenderop J.G."/>
            <person name="Gkika D."/>
            <person name="Lamers D."/>
            <person name="Prenen J."/>
            <person name="Rescher U."/>
            <person name="Gerke V."/>
            <person name="Staub O."/>
            <person name="Nilius B."/>
            <person name="Bindels R.J.M."/>
        </authorList>
    </citation>
    <scope>SUBCELLULAR LOCATION</scope>
    <scope>INTERACTION WITH S100A10 AND ANAX2</scope>
    <scope>MUTAGENESIS OF THR-593</scope>
</reference>
<reference key="8">
    <citation type="journal article" date="2003" name="J. Clin. Invest.">
        <title>Renal Ca2+ wasting, hyperabsorption, and reduced bone thickness in mice lacking TRPV5.</title>
        <authorList>
            <person name="Hoenderop J.G."/>
            <person name="van Leeuwen J.P."/>
            <person name="van der Eerden B.C."/>
            <person name="Kersten F.F."/>
            <person name="van der Kemp A.W."/>
            <person name="Merillat A.M."/>
            <person name="Waarsing J.H."/>
            <person name="Rossier B.C."/>
            <person name="Vallon V."/>
            <person name="Hummler E."/>
            <person name="Bindels R.J."/>
        </authorList>
    </citation>
    <scope>DISRUPTION PHENOTYPE</scope>
    <scope>FUNCTION</scope>
    <scope>TISSUE SPECIFICITY</scope>
    <scope>TRANSPORTER ACTIVITY</scope>
</reference>
<reference key="9">
    <citation type="journal article" date="2004" name="J. Biol. Chem.">
        <title>Regulation of the mouse epithelial Ca2(+) channel TRPV6 by the Ca(2+)-sensor calmodulin.</title>
        <authorList>
            <person name="Lambers T.T."/>
            <person name="Weidema A.F."/>
            <person name="Nilius B."/>
            <person name="Hoenderop J.G."/>
            <person name="Bindels R.J.M."/>
        </authorList>
    </citation>
    <scope>INTERACTION WITH CALMODULIN</scope>
</reference>
<reference key="10">
    <citation type="journal article" date="2006" name="J. Am. Soc. Nephrol.">
        <title>Identification of BSPRY as a novel auxiliary protein inhibiting TRPV5 activity.</title>
        <authorList>
            <person name="van de Graaf S.F.J."/>
            <person name="van der Kemp A.W.C.M."/>
            <person name="van den Berg D."/>
            <person name="van Oorschot M."/>
            <person name="Hoenderop J.G.J."/>
            <person name="Bindels R.J.M."/>
        </authorList>
    </citation>
    <scope>INTERACTION WITH BSPRY</scope>
</reference>
<reference key="11">
    <citation type="journal article" date="2010" name="Cell">
        <title>A tissue-specific atlas of mouse protein phosphorylation and expression.</title>
        <authorList>
            <person name="Huttlin E.L."/>
            <person name="Jedrychowski M.P."/>
            <person name="Elias J.E."/>
            <person name="Goswami T."/>
            <person name="Rad R."/>
            <person name="Beausoleil S.A."/>
            <person name="Villen J."/>
            <person name="Haas W."/>
            <person name="Sowa M.E."/>
            <person name="Gygi S.P."/>
        </authorList>
    </citation>
    <scope>PHOSPHORYLATION [LARGE SCALE ANALYSIS] AT THR-678 AND SER-682</scope>
    <scope>IDENTIFICATION BY MASS SPECTROMETRY [LARGE SCALE ANALYSIS]</scope>
    <source>
        <tissue>Kidney</tissue>
    </source>
</reference>
<reference key="12">
    <citation type="journal article" date="2016" name="Oncotarget">
        <title>Lifelong challenge of calcium homeostasis in male mice lacking TRPV5 leads to changes in bone and calcium metabolism.</title>
        <authorList>
            <person name="van der Eerden B.C."/>
            <person name="Koek W.N."/>
            <person name="Roschger P."/>
            <person name="Zillikens M.C."/>
            <person name="Waarsing J.H."/>
            <person name="van der Kemp A."/>
            <person name="Schreuders-Koedam M."/>
            <person name="Fratzl-Zelman N."/>
            <person name="Leenen P.J."/>
            <person name="Hoenderop J.G."/>
            <person name="Klaushofer K."/>
            <person name="Bindels R.J."/>
            <person name="van Leeuwen J.P."/>
        </authorList>
    </citation>
    <scope>DISRUPTION PHENOTYPE</scope>
</reference>
<feature type="chain" id="PRO_0000215351" description="Transient receptor potential cation channel subfamily V member 5">
    <location>
        <begin position="1"/>
        <end position="723"/>
    </location>
</feature>
<feature type="topological domain" description="Cytoplasmic" evidence="3">
    <location>
        <begin position="1"/>
        <end position="320"/>
    </location>
</feature>
<feature type="transmembrane region" description="Helical" evidence="3">
    <location>
        <begin position="321"/>
        <end position="341"/>
    </location>
</feature>
<feature type="topological domain" description="Extracellular" evidence="3">
    <location>
        <begin position="342"/>
        <end position="378"/>
    </location>
</feature>
<feature type="transmembrane region" description="Helical" evidence="3">
    <location>
        <begin position="379"/>
        <end position="401"/>
    </location>
</feature>
<feature type="topological domain" description="Extracellular" evidence="3">
    <location>
        <begin position="402"/>
        <end position="412"/>
    </location>
</feature>
<feature type="transmembrane region" description="Helical" evidence="3">
    <location>
        <begin position="413"/>
        <end position="435"/>
    </location>
</feature>
<feature type="topological domain" description="Cytoplasmic" evidence="3">
    <location>
        <begin position="436"/>
        <end position="441"/>
    </location>
</feature>
<feature type="transmembrane region" description="Helical" evidence="3">
    <location>
        <begin position="442"/>
        <end position="462"/>
    </location>
</feature>
<feature type="topological domain" description="Extracellular" evidence="3">
    <location>
        <begin position="463"/>
        <end position="485"/>
    </location>
</feature>
<feature type="transmembrane region" description="Helical" evidence="3">
    <location>
        <begin position="486"/>
        <end position="506"/>
    </location>
</feature>
<feature type="intramembrane region" description="Pore-forming" evidence="3">
    <location>
        <begin position="517"/>
        <end position="537"/>
    </location>
</feature>
<feature type="transmembrane region" description="Helical" evidence="3">
    <location>
        <begin position="550"/>
        <end position="570"/>
    </location>
</feature>
<feature type="topological domain" description="Cytoplasmic" evidence="3">
    <location>
        <begin position="571"/>
        <end position="723"/>
    </location>
</feature>
<feature type="repeat" description="ANK 1" evidence="4">
    <location>
        <begin position="38"/>
        <end position="68"/>
    </location>
</feature>
<feature type="repeat" description="ANK 2" evidence="4">
    <location>
        <begin position="72"/>
        <end position="101"/>
    </location>
</feature>
<feature type="repeat" description="ANK 3" evidence="4">
    <location>
        <begin position="110"/>
        <end position="139"/>
    </location>
</feature>
<feature type="repeat" description="ANK 4" evidence="4">
    <location>
        <begin position="156"/>
        <end position="185"/>
    </location>
</feature>
<feature type="repeat" description="ANK 5" evidence="4">
    <location>
        <begin position="189"/>
        <end position="222"/>
    </location>
</feature>
<feature type="repeat" description="ANK 6" evidence="4">
    <location>
        <begin position="232"/>
        <end position="261"/>
    </location>
</feature>
<feature type="region of interest" description="Interaction with S100A10" evidence="8">
    <location>
        <begin position="591"/>
        <end position="595"/>
    </location>
</feature>
<feature type="region of interest" description="Involved in Ca(2+)-dependent inactivation" evidence="3">
    <location>
        <begin position="643"/>
        <end position="646"/>
    </location>
</feature>
<feature type="region of interest" description="Disordered" evidence="5">
    <location>
        <begin position="651"/>
        <end position="673"/>
    </location>
</feature>
<feature type="region of interest" description="Involved in Ca(2+)-dependent inactivation" evidence="3">
    <location>
        <begin position="693"/>
        <end position="723"/>
    </location>
</feature>
<feature type="compositionally biased region" description="Polar residues" evidence="5">
    <location>
        <begin position="654"/>
        <end position="667"/>
    </location>
</feature>
<feature type="binding site" evidence="2">
    <location>
        <position position="535"/>
    </location>
    <ligand>
        <name>Ca(2+)</name>
        <dbReference type="ChEBI" id="CHEBI:29108"/>
        <note>ligand shared between two neighboring subunits</note>
    </ligand>
</feature>
<feature type="modified residue" description="Phosphothreonine" evidence="14">
    <location>
        <position position="678"/>
    </location>
</feature>
<feature type="modified residue" description="Phosphoserine" evidence="14">
    <location>
        <position position="682"/>
    </location>
</feature>
<feature type="mutagenesis site" description="Induces faster Ca(2+)-dependent channel inactivation." evidence="6">
    <original>VGAS</original>
    <variation>LGVT</variation>
    <location>
        <begin position="403"/>
        <end position="406"/>
    </location>
</feature>
<feature type="mutagenesis site" description="Abolishes interaction with S100A10, plasma membrane localization and channel activity." evidence="8">
    <original>T</original>
    <variation>A</variation>
    <location>
        <position position="593"/>
    </location>
</feature>
<feature type="sequence conflict" description="In Ref. 2; AK085479." evidence="13" ref="2">
    <original>E</original>
    <variation>K</variation>
    <location>
        <position position="302"/>
    </location>
</feature>
<keyword id="KW-0040">ANK repeat</keyword>
<keyword id="KW-0106">Calcium</keyword>
<keyword id="KW-0107">Calcium channel</keyword>
<keyword id="KW-0109">Calcium transport</keyword>
<keyword id="KW-0112">Calmodulin-binding</keyword>
<keyword id="KW-1003">Cell membrane</keyword>
<keyword id="KW-0407">Ion channel</keyword>
<keyword id="KW-0406">Ion transport</keyword>
<keyword id="KW-0472">Membrane</keyword>
<keyword id="KW-0479">Metal-binding</keyword>
<keyword id="KW-0597">Phosphoprotein</keyword>
<keyword id="KW-1185">Reference proteome</keyword>
<keyword id="KW-0677">Repeat</keyword>
<keyword id="KW-0812">Transmembrane</keyword>
<keyword id="KW-1133">Transmembrane helix</keyword>
<keyword id="KW-0813">Transport</keyword>
<protein>
    <recommendedName>
        <fullName>Transient receptor potential cation channel subfamily V member 5</fullName>
        <shortName>TrpV5</shortName>
    </recommendedName>
    <alternativeName>
        <fullName>Calcium transport protein 2</fullName>
        <shortName>CaT2</shortName>
    </alternativeName>
    <alternativeName>
        <fullName>Epithelial calcium channel 1</fullName>
        <shortName>ECaC1</shortName>
    </alternativeName>
    <alternativeName>
        <fullName>Osm-9-like TRP channel 3</fullName>
        <shortName>OTRPC3</shortName>
    </alternativeName>
</protein>
<organism>
    <name type="scientific">Mus musculus</name>
    <name type="common">Mouse</name>
    <dbReference type="NCBI Taxonomy" id="10090"/>
    <lineage>
        <taxon>Eukaryota</taxon>
        <taxon>Metazoa</taxon>
        <taxon>Chordata</taxon>
        <taxon>Craniata</taxon>
        <taxon>Vertebrata</taxon>
        <taxon>Euteleostomi</taxon>
        <taxon>Mammalia</taxon>
        <taxon>Eutheria</taxon>
        <taxon>Euarchontoglires</taxon>
        <taxon>Glires</taxon>
        <taxon>Rodentia</taxon>
        <taxon>Myomorpha</taxon>
        <taxon>Muroidea</taxon>
        <taxon>Muridae</taxon>
        <taxon>Murinae</taxon>
        <taxon>Mus</taxon>
        <taxon>Mus</taxon>
    </lineage>
</organism>
<sequence length="723" mass="82218">MGAKTPWIQLQKLLNWWVRDQDWNQHVDQLHMLQQKSIWESPLLRAAKENDMCTLKKLQHDQNCDFRQRGALGETALHVAALYDNLDAAIMLMEAAPYLVTESTLCEPFVGQTALHIAVMNQNVNLVRALLARGASASARATGSAFHRSSHNLIYYGEHPLSFAACVGSEEIVRLLIEHGADIRAQDSLGNTVLHILVLQPNKTFACQMYNLLLSYDGGDHLKSLELVPNNQGLTPFKLAGVEGNTVMFQHLMQKRKRIQWSFGPLTSSLYDLTEIDSWGEELSFLELVVSSKKKEARQILEQTPVKELVSLKWKKYGQPYFCLLGALYIFYMVCFTTCCVYRPLKFRDANRTHVRDNTIMEQKSLQEAYVTYQDKIRLVGELVTVIGAVIILLLEIPDIFRVGASRYFGQTVLGGPFHVIIITYASLVLLTMAMRLTNVNGEVVPMSMALVLGWCSVMYFARGFQMLGPFTIMIQKMIFGDLLRFCWLMAMVILGFASAFYIIFQTEDPDNLGEFSDYPTAMFSTFELFLTIIDGPANYRVDLPFMYSVTYATFAIIATLLMLNLFIAMMGDTHWRVAQERDELWRAQVVATTVMLERKMPRFLWPRSGICGCEYGLGDRWFLRVEHHQEQNPYRVLRYVEAFKSSDKEEVQEQLSEKQPSGTETGTLARGSVVLQTPPLSRTTSLSSNSHRGWEILRRNTLGHLNLGLDPGEGDGEEIYQF</sequence>
<gene>
    <name type="primary">Trpv5</name>
</gene>
<dbReference type="EMBL" id="AF336378">
    <property type="protein sequence ID" value="AAM53408.1"/>
    <property type="molecule type" value="Genomic_DNA"/>
</dbReference>
<dbReference type="EMBL" id="AK085479">
    <property type="status" value="NOT_ANNOTATED_CDS"/>
    <property type="molecule type" value="mRNA"/>
</dbReference>
<dbReference type="EMBL" id="BC110554">
    <property type="protein sequence ID" value="AAI10555.1"/>
    <property type="molecule type" value="mRNA"/>
</dbReference>
<dbReference type="EMBL" id="BC110555">
    <property type="protein sequence ID" value="AAI10556.1"/>
    <property type="molecule type" value="mRNA"/>
</dbReference>
<dbReference type="EMBL" id="CH466533">
    <property type="protein sequence ID" value="EDL13503.1"/>
    <property type="molecule type" value="Genomic_DNA"/>
</dbReference>
<dbReference type="CCDS" id="CCDS20053.1"/>
<dbReference type="RefSeq" id="NP_001007573.1">
    <property type="nucleotide sequence ID" value="NM_001007572.2"/>
</dbReference>
<dbReference type="RefSeq" id="XP_017176952.1">
    <property type="nucleotide sequence ID" value="XM_017321463.2"/>
</dbReference>
<dbReference type="SMR" id="P69744"/>
<dbReference type="BioGRID" id="228781">
    <property type="interactions" value="4"/>
</dbReference>
<dbReference type="CORUM" id="P69744"/>
<dbReference type="FunCoup" id="P69744">
    <property type="interactions" value="55"/>
</dbReference>
<dbReference type="IntAct" id="P69744">
    <property type="interactions" value="2"/>
</dbReference>
<dbReference type="MINT" id="P69744"/>
<dbReference type="STRING" id="10090.ENSMUSP00000031901"/>
<dbReference type="GlyGen" id="P69744">
    <property type="glycosylation" value="1 site"/>
</dbReference>
<dbReference type="iPTMnet" id="P69744"/>
<dbReference type="PhosphoSitePlus" id="P69744"/>
<dbReference type="PaxDb" id="10090-ENSMUSP00000031901"/>
<dbReference type="ProteomicsDB" id="297527"/>
<dbReference type="Antibodypedia" id="32594">
    <property type="antibodies" value="298 antibodies from 34 providers"/>
</dbReference>
<dbReference type="DNASU" id="194352"/>
<dbReference type="Ensembl" id="ENSMUST00000031901.11">
    <property type="protein sequence ID" value="ENSMUSP00000031901.6"/>
    <property type="gene ID" value="ENSMUSG00000036899.11"/>
</dbReference>
<dbReference type="GeneID" id="194352"/>
<dbReference type="KEGG" id="mmu:194352"/>
<dbReference type="UCSC" id="uc009bqd.1">
    <property type="organism name" value="mouse"/>
</dbReference>
<dbReference type="AGR" id="MGI:2429764"/>
<dbReference type="CTD" id="56302"/>
<dbReference type="MGI" id="MGI:2429764">
    <property type="gene designation" value="Trpv5"/>
</dbReference>
<dbReference type="VEuPathDB" id="HostDB:ENSMUSG00000036899"/>
<dbReference type="eggNOG" id="KOG3676">
    <property type="taxonomic scope" value="Eukaryota"/>
</dbReference>
<dbReference type="GeneTree" id="ENSGT00940000161809"/>
<dbReference type="HOGENOM" id="CLU_012795_2_0_1"/>
<dbReference type="InParanoid" id="P69744"/>
<dbReference type="OMA" id="AYETHED"/>
<dbReference type="OrthoDB" id="533508at2759"/>
<dbReference type="PhylomeDB" id="P69744"/>
<dbReference type="TreeFam" id="TF314711"/>
<dbReference type="Reactome" id="R-MMU-3295583">
    <property type="pathway name" value="TRP channels"/>
</dbReference>
<dbReference type="BioGRID-ORCS" id="194352">
    <property type="hits" value="1 hit in 76 CRISPR screens"/>
</dbReference>
<dbReference type="ChiTaRS" id="Trpv5">
    <property type="organism name" value="mouse"/>
</dbReference>
<dbReference type="PRO" id="PR:P69744"/>
<dbReference type="Proteomes" id="UP000000589">
    <property type="component" value="Chromosome 6"/>
</dbReference>
<dbReference type="RNAct" id="P69744">
    <property type="molecule type" value="protein"/>
</dbReference>
<dbReference type="Bgee" id="ENSMUSG00000036899">
    <property type="expression patterns" value="Expressed in right kidney and 34 other cell types or tissues"/>
</dbReference>
<dbReference type="ExpressionAtlas" id="P69744">
    <property type="expression patterns" value="baseline and differential"/>
</dbReference>
<dbReference type="GO" id="GO:0016324">
    <property type="term" value="C:apical plasma membrane"/>
    <property type="evidence" value="ECO:0000314"/>
    <property type="project" value="MGI"/>
</dbReference>
<dbReference type="GO" id="GO:0034704">
    <property type="term" value="C:calcium channel complex"/>
    <property type="evidence" value="ECO:0000314"/>
    <property type="project" value="UniProtKB"/>
</dbReference>
<dbReference type="GO" id="GO:0005886">
    <property type="term" value="C:plasma membrane"/>
    <property type="evidence" value="ECO:0000250"/>
    <property type="project" value="UniProtKB"/>
</dbReference>
<dbReference type="GO" id="GO:0005262">
    <property type="term" value="F:calcium channel activity"/>
    <property type="evidence" value="ECO:0000314"/>
    <property type="project" value="UniProtKB"/>
</dbReference>
<dbReference type="GO" id="GO:0005516">
    <property type="term" value="F:calmodulin binding"/>
    <property type="evidence" value="ECO:0007669"/>
    <property type="project" value="UniProtKB-KW"/>
</dbReference>
<dbReference type="GO" id="GO:0046872">
    <property type="term" value="F:metal ion binding"/>
    <property type="evidence" value="ECO:0007669"/>
    <property type="project" value="UniProtKB-KW"/>
</dbReference>
<dbReference type="GO" id="GO:0055074">
    <property type="term" value="P:calcium ion homeostasis"/>
    <property type="evidence" value="ECO:0000315"/>
    <property type="project" value="UniProtKB"/>
</dbReference>
<dbReference type="GO" id="GO:0098703">
    <property type="term" value="P:calcium ion import across plasma membrane"/>
    <property type="evidence" value="ECO:0000250"/>
    <property type="project" value="UniProtKB"/>
</dbReference>
<dbReference type="GO" id="GO:0070588">
    <property type="term" value="P:calcium ion transmembrane transport"/>
    <property type="evidence" value="ECO:0000315"/>
    <property type="project" value="UniProtKB"/>
</dbReference>
<dbReference type="GO" id="GO:0006816">
    <property type="term" value="P:calcium ion transport"/>
    <property type="evidence" value="ECO:0000314"/>
    <property type="project" value="UniProtKB"/>
</dbReference>
<dbReference type="GO" id="GO:0060402">
    <property type="term" value="P:calcium ion transport into cytosol"/>
    <property type="evidence" value="ECO:0007669"/>
    <property type="project" value="Ensembl"/>
</dbReference>
<dbReference type="GO" id="GO:0006874">
    <property type="term" value="P:intracellular calcium ion homeostasis"/>
    <property type="evidence" value="ECO:0000303"/>
    <property type="project" value="UniProtKB"/>
</dbReference>
<dbReference type="GO" id="GO:0051289">
    <property type="term" value="P:protein homotetramerization"/>
    <property type="evidence" value="ECO:0000250"/>
    <property type="project" value="UniProtKB"/>
</dbReference>
<dbReference type="GO" id="GO:0035809">
    <property type="term" value="P:regulation of urine volume"/>
    <property type="evidence" value="ECO:0000315"/>
    <property type="project" value="UniProtKB"/>
</dbReference>
<dbReference type="CDD" id="cd22296">
    <property type="entry name" value="CBD_TRPV5_C"/>
    <property type="match status" value="1"/>
</dbReference>
<dbReference type="CDD" id="cd22192">
    <property type="entry name" value="TRPV5-6"/>
    <property type="match status" value="1"/>
</dbReference>
<dbReference type="FunFam" id="1.25.40.20:FF:000487">
    <property type="entry name" value="Transient receptor potential cation channel subfamily V member 5"/>
    <property type="match status" value="1"/>
</dbReference>
<dbReference type="FunFam" id="1.25.40.20:FF:000143">
    <property type="entry name" value="transient receptor potential cation channel subfamily V member 5"/>
    <property type="match status" value="1"/>
</dbReference>
<dbReference type="Gene3D" id="1.10.287.70">
    <property type="match status" value="1"/>
</dbReference>
<dbReference type="Gene3D" id="1.25.40.20">
    <property type="entry name" value="Ankyrin repeat-containing domain"/>
    <property type="match status" value="1"/>
</dbReference>
<dbReference type="InterPro" id="IPR002110">
    <property type="entry name" value="Ankyrin_rpt"/>
</dbReference>
<dbReference type="InterPro" id="IPR036770">
    <property type="entry name" value="Ankyrin_rpt-contain_sf"/>
</dbReference>
<dbReference type="InterPro" id="IPR005821">
    <property type="entry name" value="Ion_trans_dom"/>
</dbReference>
<dbReference type="InterPro" id="IPR024862">
    <property type="entry name" value="TRPV"/>
</dbReference>
<dbReference type="InterPro" id="IPR008346">
    <property type="entry name" value="TRPV5"/>
</dbReference>
<dbReference type="InterPro" id="IPR008344">
    <property type="entry name" value="TRPV5/TRPV6"/>
</dbReference>
<dbReference type="NCBIfam" id="TIGR00870">
    <property type="entry name" value="trp"/>
    <property type="match status" value="1"/>
</dbReference>
<dbReference type="PANTHER" id="PTHR10582:SF11">
    <property type="entry name" value="TRANSIENT RECEPTOR POTENTIAL CATION CHANNEL SUBFAMILY V MEMBER 5"/>
    <property type="match status" value="1"/>
</dbReference>
<dbReference type="PANTHER" id="PTHR10582">
    <property type="entry name" value="TRANSIENT RECEPTOR POTENTIAL ION CHANNEL PROTEIN"/>
    <property type="match status" value="1"/>
</dbReference>
<dbReference type="Pfam" id="PF12796">
    <property type="entry name" value="Ank_2"/>
    <property type="match status" value="2"/>
</dbReference>
<dbReference type="Pfam" id="PF00520">
    <property type="entry name" value="Ion_trans"/>
    <property type="match status" value="1"/>
</dbReference>
<dbReference type="PRINTS" id="PR01415">
    <property type="entry name" value="ANKYRIN"/>
</dbReference>
<dbReference type="PRINTS" id="PR01765">
    <property type="entry name" value="ECACCHANNEL"/>
</dbReference>
<dbReference type="PRINTS" id="PR01767">
    <property type="entry name" value="ECACCHANNEL2"/>
</dbReference>
<dbReference type="SMART" id="SM00248">
    <property type="entry name" value="ANK"/>
    <property type="match status" value="4"/>
</dbReference>
<dbReference type="SUPFAM" id="SSF48403">
    <property type="entry name" value="Ankyrin repeat"/>
    <property type="match status" value="1"/>
</dbReference>
<dbReference type="PROSITE" id="PS50297">
    <property type="entry name" value="ANK_REP_REGION"/>
    <property type="match status" value="1"/>
</dbReference>
<dbReference type="PROSITE" id="PS50088">
    <property type="entry name" value="ANK_REPEAT"/>
    <property type="match status" value="2"/>
</dbReference>
<evidence type="ECO:0000250" key="1">
    <source>
        <dbReference type="UniProtKB" id="Q9NQA5"/>
    </source>
</evidence>
<evidence type="ECO:0000250" key="2">
    <source>
        <dbReference type="UniProtKB" id="Q9R186"/>
    </source>
</evidence>
<evidence type="ECO:0000250" key="3">
    <source>
        <dbReference type="UniProtKB" id="Q9XSM3"/>
    </source>
</evidence>
<evidence type="ECO:0000255" key="4"/>
<evidence type="ECO:0000256" key="5">
    <source>
        <dbReference type="SAM" id="MobiDB-lite"/>
    </source>
</evidence>
<evidence type="ECO:0000269" key="6">
    <source>
    </source>
</evidence>
<evidence type="ECO:0000269" key="7">
    <source>
    </source>
</evidence>
<evidence type="ECO:0000269" key="8">
    <source>
    </source>
</evidence>
<evidence type="ECO:0000269" key="9">
    <source>
    </source>
</evidence>
<evidence type="ECO:0000269" key="10">
    <source>
    </source>
</evidence>
<evidence type="ECO:0000269" key="11">
    <source>
    </source>
</evidence>
<evidence type="ECO:0000269" key="12">
    <source>
    </source>
</evidence>
<evidence type="ECO:0000305" key="13"/>
<evidence type="ECO:0007744" key="14">
    <source>
    </source>
</evidence>